<protein>
    <recommendedName>
        <fullName>Phosphatidylglycerol/phosphatidylinositol transfer protein</fullName>
        <shortName>PG/PI-TP</shortName>
    </recommendedName>
</protein>
<feature type="signal peptide" evidence="2">
    <location>
        <begin position="1"/>
        <end position="18"/>
    </location>
</feature>
<feature type="propeptide" id="PRO_0000019873" evidence="1">
    <location>
        <begin position="19"/>
        <end position="37"/>
    </location>
</feature>
<feature type="chain" id="PRO_0000019874" description="Phosphatidylglycerol/phosphatidylinositol transfer protein">
    <location>
        <begin position="38"/>
        <end position="213"/>
    </location>
</feature>
<comment type="function">
    <text evidence="1">Catalyzes the intermembrane transfer of phosphatidylglycerol and phosphatidylinositol.</text>
</comment>
<comment type="subunit">
    <text evidence="1">Monomer.</text>
</comment>
<comment type="similarity">
    <text evidence="3">Belongs to the NPC2 family.</text>
</comment>
<gene>
    <name type="primary">NPC2</name>
    <name type="ordered locus">AER201C</name>
</gene>
<proteinExistence type="inferred from homology"/>
<evidence type="ECO:0000250" key="1"/>
<evidence type="ECO:0000255" key="2"/>
<evidence type="ECO:0000305" key="3"/>
<sequence length="213" mass="24053">MRVSVWYGLLHAAAWTRAVSLQVSEDSDEQWTVALRDSRPIPGGSPLSRCDLDEDHLLDVQEIEITPNPPHRGKNLTVEARGDLFGPVEDGAYVTVEVRLGYIKLLSETFDLCKELEENDLGLQCPLEEGEYELSKTVEIPQQVPPGRYHVVARAYTVDDEPITCLTGDVYFPPLMPAERSRMPRLIDPRRMRRLMDPRRKPRIMDEGSGAAA</sequence>
<accession>Q756Q3</accession>
<organism>
    <name type="scientific">Eremothecium gossypii (strain ATCC 10895 / CBS 109.51 / FGSC 9923 / NRRL Y-1056)</name>
    <name type="common">Yeast</name>
    <name type="synonym">Ashbya gossypii</name>
    <dbReference type="NCBI Taxonomy" id="284811"/>
    <lineage>
        <taxon>Eukaryota</taxon>
        <taxon>Fungi</taxon>
        <taxon>Dikarya</taxon>
        <taxon>Ascomycota</taxon>
        <taxon>Saccharomycotina</taxon>
        <taxon>Saccharomycetes</taxon>
        <taxon>Saccharomycetales</taxon>
        <taxon>Saccharomycetaceae</taxon>
        <taxon>Eremothecium</taxon>
    </lineage>
</organism>
<keyword id="KW-0445">Lipid transport</keyword>
<keyword id="KW-1185">Reference proteome</keyword>
<keyword id="KW-0732">Signal</keyword>
<keyword id="KW-0813">Transport</keyword>
<dbReference type="EMBL" id="AE016818">
    <property type="protein sequence ID" value="AAS52882.1"/>
    <property type="molecule type" value="Genomic_DNA"/>
</dbReference>
<dbReference type="RefSeq" id="NP_985058.1">
    <property type="nucleotide sequence ID" value="NM_210412.1"/>
</dbReference>
<dbReference type="SMR" id="Q756Q3"/>
<dbReference type="FunCoup" id="Q756Q3">
    <property type="interactions" value="114"/>
</dbReference>
<dbReference type="STRING" id="284811.Q756Q3"/>
<dbReference type="EnsemblFungi" id="AAS52882">
    <property type="protein sequence ID" value="AAS52882"/>
    <property type="gene ID" value="AGOS_AER201C"/>
</dbReference>
<dbReference type="GeneID" id="4621268"/>
<dbReference type="KEGG" id="ago:AGOS_AER201C"/>
<dbReference type="eggNOG" id="KOG4680">
    <property type="taxonomic scope" value="Eukaryota"/>
</dbReference>
<dbReference type="HOGENOM" id="CLU_097982_0_0_1"/>
<dbReference type="InParanoid" id="Q756Q3"/>
<dbReference type="OMA" id="KPRIMDE"/>
<dbReference type="OrthoDB" id="6409159at2759"/>
<dbReference type="Proteomes" id="UP000000591">
    <property type="component" value="Chromosome V"/>
</dbReference>
<dbReference type="GO" id="GO:0000328">
    <property type="term" value="C:fungal-type vacuole lumen"/>
    <property type="evidence" value="ECO:0007669"/>
    <property type="project" value="EnsemblFungi"/>
</dbReference>
<dbReference type="GO" id="GO:0031210">
    <property type="term" value="F:phosphatidylcholine binding"/>
    <property type="evidence" value="ECO:0007669"/>
    <property type="project" value="EnsemblFungi"/>
</dbReference>
<dbReference type="GO" id="GO:0035091">
    <property type="term" value="F:phosphatidylinositol binding"/>
    <property type="evidence" value="ECO:0007669"/>
    <property type="project" value="EnsemblFungi"/>
</dbReference>
<dbReference type="GO" id="GO:0001786">
    <property type="term" value="F:phosphatidylserine binding"/>
    <property type="evidence" value="ECO:0007669"/>
    <property type="project" value="EnsemblFungi"/>
</dbReference>
<dbReference type="GO" id="GO:0032934">
    <property type="term" value="F:sterol binding"/>
    <property type="evidence" value="ECO:0000318"/>
    <property type="project" value="GO_Central"/>
</dbReference>
<dbReference type="GO" id="GO:0032366">
    <property type="term" value="P:intracellular sterol transport"/>
    <property type="evidence" value="ECO:0007669"/>
    <property type="project" value="EnsemblFungi"/>
</dbReference>
<dbReference type="GO" id="GO:0015918">
    <property type="term" value="P:sterol transport"/>
    <property type="evidence" value="ECO:0000318"/>
    <property type="project" value="GO_Central"/>
</dbReference>
<dbReference type="CDD" id="cd00917">
    <property type="entry name" value="PG-PI_TP"/>
    <property type="match status" value="1"/>
</dbReference>
<dbReference type="Gene3D" id="2.70.220.10">
    <property type="entry name" value="Ganglioside GM2 activator"/>
    <property type="match status" value="1"/>
</dbReference>
<dbReference type="InterPro" id="IPR036846">
    <property type="entry name" value="GM2-AP_sf"/>
</dbReference>
<dbReference type="InterPro" id="IPR014756">
    <property type="entry name" value="Ig_E-set"/>
</dbReference>
<dbReference type="InterPro" id="IPR003172">
    <property type="entry name" value="ML_dom"/>
</dbReference>
<dbReference type="InterPro" id="IPR033917">
    <property type="entry name" value="ML_PG-PI_TP"/>
</dbReference>
<dbReference type="InterPro" id="IPR039670">
    <property type="entry name" value="NPC2-like"/>
</dbReference>
<dbReference type="PANTHER" id="PTHR11306">
    <property type="entry name" value="NIEMANN PICK TYPE C2 PROTEIN NPC2-RELATED"/>
    <property type="match status" value="1"/>
</dbReference>
<dbReference type="PANTHER" id="PTHR11306:SF0">
    <property type="entry name" value="PHOSPHATIDYLGLYCEROL_PHOSPHATIDYLINOSITOL TRANSFER PROTEIN"/>
    <property type="match status" value="1"/>
</dbReference>
<dbReference type="Pfam" id="PF02221">
    <property type="entry name" value="E1_DerP2_DerF2"/>
    <property type="match status" value="1"/>
</dbReference>
<dbReference type="SMART" id="SM00737">
    <property type="entry name" value="ML"/>
    <property type="match status" value="1"/>
</dbReference>
<dbReference type="SUPFAM" id="SSF81296">
    <property type="entry name" value="E set domains"/>
    <property type="match status" value="1"/>
</dbReference>
<name>NPC2_EREGS</name>
<reference key="1">
    <citation type="journal article" date="2004" name="Science">
        <title>The Ashbya gossypii genome as a tool for mapping the ancient Saccharomyces cerevisiae genome.</title>
        <authorList>
            <person name="Dietrich F.S."/>
            <person name="Voegeli S."/>
            <person name="Brachat S."/>
            <person name="Lerch A."/>
            <person name="Gates K."/>
            <person name="Steiner S."/>
            <person name="Mohr C."/>
            <person name="Poehlmann R."/>
            <person name="Luedi P."/>
            <person name="Choi S."/>
            <person name="Wing R.A."/>
            <person name="Flavier A."/>
            <person name="Gaffney T.D."/>
            <person name="Philippsen P."/>
        </authorList>
    </citation>
    <scope>NUCLEOTIDE SEQUENCE [LARGE SCALE GENOMIC DNA]</scope>
    <source>
        <strain>ATCC 10895 / CBS 109.51 / FGSC 9923 / NRRL Y-1056</strain>
    </source>
</reference>
<reference key="2">
    <citation type="journal article" date="2013" name="G3 (Bethesda)">
        <title>Genomes of Ashbya fungi isolated from insects reveal four mating-type loci, numerous translocations, lack of transposons, and distinct gene duplications.</title>
        <authorList>
            <person name="Dietrich F.S."/>
            <person name="Voegeli S."/>
            <person name="Kuo S."/>
            <person name="Philippsen P."/>
        </authorList>
    </citation>
    <scope>GENOME REANNOTATION</scope>
    <source>
        <strain>ATCC 10895 / CBS 109.51 / FGSC 9923 / NRRL Y-1056</strain>
    </source>
</reference>